<dbReference type="EMBL" id="DQ291132">
    <property type="protein sequence ID" value="ABB81949.1"/>
    <property type="molecule type" value="Genomic_DNA"/>
</dbReference>
<dbReference type="RefSeq" id="YP_635881.1">
    <property type="nucleotide sequence ID" value="NC_008099.1"/>
</dbReference>
<dbReference type="SMR" id="Q20EW4"/>
<dbReference type="GeneID" id="4100128"/>
<dbReference type="GO" id="GO:0009535">
    <property type="term" value="C:chloroplast thylakoid membrane"/>
    <property type="evidence" value="ECO:0007669"/>
    <property type="project" value="UniProtKB-SubCell"/>
</dbReference>
<dbReference type="GO" id="GO:0009539">
    <property type="term" value="C:photosystem II reaction center"/>
    <property type="evidence" value="ECO:0007669"/>
    <property type="project" value="InterPro"/>
</dbReference>
<dbReference type="GO" id="GO:0015979">
    <property type="term" value="P:photosynthesis"/>
    <property type="evidence" value="ECO:0007669"/>
    <property type="project" value="UniProtKB-UniRule"/>
</dbReference>
<dbReference type="HAMAP" id="MF_01317">
    <property type="entry name" value="PSII_PsbL"/>
    <property type="match status" value="1"/>
</dbReference>
<dbReference type="InterPro" id="IPR003372">
    <property type="entry name" value="PSII_PsbL"/>
</dbReference>
<dbReference type="InterPro" id="IPR037266">
    <property type="entry name" value="PSII_PsbL_sf"/>
</dbReference>
<dbReference type="NCBIfam" id="NF001972">
    <property type="entry name" value="PRK00753.1"/>
    <property type="match status" value="1"/>
</dbReference>
<dbReference type="Pfam" id="PF02419">
    <property type="entry name" value="PsbL"/>
    <property type="match status" value="1"/>
</dbReference>
<dbReference type="SUPFAM" id="SSF161017">
    <property type="entry name" value="Photosystem II reaction center protein L, PsbL"/>
    <property type="match status" value="1"/>
</dbReference>
<gene>
    <name evidence="1" type="primary">psbL</name>
</gene>
<evidence type="ECO:0000255" key="1">
    <source>
        <dbReference type="HAMAP-Rule" id="MF_01317"/>
    </source>
</evidence>
<feature type="chain" id="PRO_0000276214" description="Photosystem II reaction center protein L">
    <location>
        <begin position="1"/>
        <end position="38"/>
    </location>
</feature>
<feature type="transmembrane region" description="Helical" evidence="1">
    <location>
        <begin position="17"/>
        <end position="37"/>
    </location>
</feature>
<organism>
    <name type="scientific">Oltmannsiellopsis viridis</name>
    <name type="common">Marine flagellate</name>
    <name type="synonym">Oltmannsiella viridis</name>
    <dbReference type="NCBI Taxonomy" id="51324"/>
    <lineage>
        <taxon>Eukaryota</taxon>
        <taxon>Viridiplantae</taxon>
        <taxon>Chlorophyta</taxon>
        <taxon>Ulvophyceae</taxon>
        <taxon>Oltmannsiellopsidales</taxon>
        <taxon>Oltmannsiellopsidaceae</taxon>
        <taxon>Oltmannsiellopsis</taxon>
    </lineage>
</organism>
<name>PSBL_OLTVI</name>
<accession>Q20EW4</accession>
<comment type="function">
    <text evidence="1">One of the components of the core complex of photosystem II (PSII). PSII is a light-driven water:plastoquinone oxidoreductase that uses light energy to abstract electrons from H(2)O, generating O(2) and a proton gradient subsequently used for ATP formation. It consists of a core antenna complex that captures photons, and an electron transfer chain that converts photonic excitation into a charge separation. This subunit is found at the monomer-monomer interface and is required for correct PSII assembly and/or dimerization.</text>
</comment>
<comment type="subunit">
    <text evidence="1">PSII is composed of 1 copy each of membrane proteins PsbA, PsbB, PsbC, PsbD, PsbE, PsbF, PsbH, PsbI, PsbJ, PsbK, PsbL, PsbM, PsbT, PsbX, PsbY, PsbZ, Psb30/Ycf12, at least 3 peripheral proteins of the oxygen-evolving complex and a large number of cofactors. It forms dimeric complexes.</text>
</comment>
<comment type="subcellular location">
    <subcellularLocation>
        <location evidence="1">Plastid</location>
        <location evidence="1">Chloroplast thylakoid membrane</location>
        <topology evidence="1">Single-pass membrane protein</topology>
    </subcellularLocation>
</comment>
<comment type="similarity">
    <text evidence="1">Belongs to the PsbL family.</text>
</comment>
<geneLocation type="chloroplast"/>
<sequence length="38" mass="4388">MAKPNPNKQSVELNRTSLYWGLLLIFVLAVLFSSYIFN</sequence>
<reference key="1">
    <citation type="journal article" date="2006" name="BMC Biol.">
        <title>The complete chloroplast DNA sequence of the green alga Oltmannsiellopsis viridis reveals a distinctive quadripartite architecture in the chloroplast genome of early diverging ulvophytes.</title>
        <authorList>
            <person name="Pombert J.-F."/>
            <person name="Lemieux C."/>
            <person name="Turmel M."/>
        </authorList>
    </citation>
    <scope>NUCLEOTIDE SEQUENCE [LARGE SCALE GENOMIC DNA]</scope>
</reference>
<proteinExistence type="inferred from homology"/>
<keyword id="KW-0150">Chloroplast</keyword>
<keyword id="KW-0472">Membrane</keyword>
<keyword id="KW-0602">Photosynthesis</keyword>
<keyword id="KW-0604">Photosystem II</keyword>
<keyword id="KW-0934">Plastid</keyword>
<keyword id="KW-0674">Reaction center</keyword>
<keyword id="KW-0793">Thylakoid</keyword>
<keyword id="KW-0812">Transmembrane</keyword>
<keyword id="KW-1133">Transmembrane helix</keyword>
<protein>
    <recommendedName>
        <fullName evidence="1">Photosystem II reaction center protein L</fullName>
        <shortName evidence="1">PSII-L</shortName>
    </recommendedName>
</protein>